<keyword id="KW-0010">Activator</keyword>
<keyword id="KW-0539">Nucleus</keyword>
<keyword id="KW-1185">Reference proteome</keyword>
<keyword id="KW-0804">Transcription</keyword>
<keyword id="KW-0805">Transcription regulation</keyword>
<proteinExistence type="inferred from homology"/>
<sequence length="170" mass="18701">MTTGALPSTPANEPLIKSADNVANLIESFIELGVLVHDNQGTPQSNQALMNKLNQLISQLSQTSTTANDPNDANTNLKQFLIPIDVISYIEDGRNPDIYTREFIEVNAKSNARLKGKMLGFKKLRDVFGDKLKQEFPQLEKGVDDIINRTNDNSSHTASVITDTANNNNS</sequence>
<organism>
    <name type="scientific">Candida albicans (strain SC5314 / ATCC MYA-2876)</name>
    <name type="common">Yeast</name>
    <dbReference type="NCBI Taxonomy" id="237561"/>
    <lineage>
        <taxon>Eukaryota</taxon>
        <taxon>Fungi</taxon>
        <taxon>Dikarya</taxon>
        <taxon>Ascomycota</taxon>
        <taxon>Saccharomycotina</taxon>
        <taxon>Pichiomycetes</taxon>
        <taxon>Debaryomycetaceae</taxon>
        <taxon>Candida/Lodderomyces clade</taxon>
        <taxon>Candida</taxon>
    </lineage>
</organism>
<feature type="chain" id="PRO_0000303166" description="Mediator of RNA polymerase II transcription subunit 10">
    <location>
        <begin position="1"/>
        <end position="170"/>
    </location>
</feature>
<reference key="1">
    <citation type="journal article" date="2004" name="Proc. Natl. Acad. Sci. U.S.A.">
        <title>The diploid genome sequence of Candida albicans.</title>
        <authorList>
            <person name="Jones T."/>
            <person name="Federspiel N.A."/>
            <person name="Chibana H."/>
            <person name="Dungan J."/>
            <person name="Kalman S."/>
            <person name="Magee B.B."/>
            <person name="Newport G."/>
            <person name="Thorstenson Y.R."/>
            <person name="Agabian N."/>
            <person name="Magee P.T."/>
            <person name="Davis R.W."/>
            <person name="Scherer S."/>
        </authorList>
    </citation>
    <scope>NUCLEOTIDE SEQUENCE [LARGE SCALE GENOMIC DNA]</scope>
    <source>
        <strain>SC5314 / ATCC MYA-2876</strain>
    </source>
</reference>
<reference key="2">
    <citation type="journal article" date="2007" name="Genome Biol.">
        <title>Assembly of the Candida albicans genome into sixteen supercontigs aligned on the eight chromosomes.</title>
        <authorList>
            <person name="van het Hoog M."/>
            <person name="Rast T.J."/>
            <person name="Martchenko M."/>
            <person name="Grindle S."/>
            <person name="Dignard D."/>
            <person name="Hogues H."/>
            <person name="Cuomo C."/>
            <person name="Berriman M."/>
            <person name="Scherer S."/>
            <person name="Magee B.B."/>
            <person name="Whiteway M."/>
            <person name="Chibana H."/>
            <person name="Nantel A."/>
            <person name="Magee P.T."/>
        </authorList>
    </citation>
    <scope>GENOME REANNOTATION</scope>
    <source>
        <strain>SC5314 / ATCC MYA-2876</strain>
    </source>
</reference>
<reference key="3">
    <citation type="journal article" date="2013" name="Genome Biol.">
        <title>Assembly of a phased diploid Candida albicans genome facilitates allele-specific measurements and provides a simple model for repeat and indel structure.</title>
        <authorList>
            <person name="Muzzey D."/>
            <person name="Schwartz K."/>
            <person name="Weissman J.S."/>
            <person name="Sherlock G."/>
        </authorList>
    </citation>
    <scope>NUCLEOTIDE SEQUENCE [LARGE SCALE GENOMIC DNA]</scope>
    <scope>GENOME REANNOTATION</scope>
    <source>
        <strain>SC5314 / ATCC MYA-2876</strain>
    </source>
</reference>
<name>MED10_CANAL</name>
<comment type="function">
    <text evidence="1">Component of the Mediator complex, a coactivator involved in the regulated transcription of nearly all RNA polymerase II-dependent genes. Mediator functions as a bridge to convey information from gene-specific regulatory proteins to the basal RNA polymerase II transcription machinery. Mediator is recruited to promoters by direct interactions with regulatory proteins and serves as a scaffold for the assembly of a functional preinitiation complex with RNA polymerase II and the general transcription factors (By similarity).</text>
</comment>
<comment type="subunit">
    <text evidence="1">Component of the Mediator complex.</text>
</comment>
<comment type="subcellular location">
    <subcellularLocation>
        <location evidence="1">Nucleus</location>
    </subcellularLocation>
</comment>
<comment type="similarity">
    <text evidence="2">Belongs to the Mediator complex subunit 10 family.</text>
</comment>
<accession>Q5A3K2</accession>
<accession>A0A1D8PFA0</accession>
<protein>
    <recommendedName>
        <fullName>Mediator of RNA polymerase II transcription subunit 10</fullName>
    </recommendedName>
    <alternativeName>
        <fullName>Mediator complex subunit 10</fullName>
    </alternativeName>
</protein>
<dbReference type="EMBL" id="CP017623">
    <property type="protein sequence ID" value="AOW26818.1"/>
    <property type="molecule type" value="Genomic_DNA"/>
</dbReference>
<dbReference type="RefSeq" id="XP_716337.1">
    <property type="nucleotide sequence ID" value="XM_711244.1"/>
</dbReference>
<dbReference type="SMR" id="Q5A3K2"/>
<dbReference type="BioGRID" id="1225088">
    <property type="interactions" value="2"/>
</dbReference>
<dbReference type="FunCoup" id="Q5A3K2">
    <property type="interactions" value="614"/>
</dbReference>
<dbReference type="STRING" id="237561.Q5A3K2"/>
<dbReference type="EnsemblFungi" id="C1_11980W_A-T">
    <property type="protein sequence ID" value="C1_11980W_A-T-p1"/>
    <property type="gene ID" value="C1_11980W_A"/>
</dbReference>
<dbReference type="GeneID" id="3642043"/>
<dbReference type="KEGG" id="cal:CAALFM_C111980WA"/>
<dbReference type="CGD" id="CAL0000183331">
    <property type="gene designation" value="MED10"/>
</dbReference>
<dbReference type="VEuPathDB" id="FungiDB:C1_11980W_A"/>
<dbReference type="eggNOG" id="KOG3046">
    <property type="taxonomic scope" value="Eukaryota"/>
</dbReference>
<dbReference type="HOGENOM" id="CLU_096169_1_0_1"/>
<dbReference type="InParanoid" id="Q5A3K2"/>
<dbReference type="OMA" id="QYQRAKM"/>
<dbReference type="OrthoDB" id="337270at2759"/>
<dbReference type="PRO" id="PR:Q5A3K2"/>
<dbReference type="Proteomes" id="UP000000559">
    <property type="component" value="Chromosome 1"/>
</dbReference>
<dbReference type="GO" id="GO:0016592">
    <property type="term" value="C:mediator complex"/>
    <property type="evidence" value="ECO:0007669"/>
    <property type="project" value="InterPro"/>
</dbReference>
<dbReference type="GO" id="GO:0003712">
    <property type="term" value="F:transcription coregulator activity"/>
    <property type="evidence" value="ECO:0007669"/>
    <property type="project" value="InterPro"/>
</dbReference>
<dbReference type="GO" id="GO:0006357">
    <property type="term" value="P:regulation of transcription by RNA polymerase II"/>
    <property type="evidence" value="ECO:0007669"/>
    <property type="project" value="InterPro"/>
</dbReference>
<dbReference type="InterPro" id="IPR019145">
    <property type="entry name" value="Mediator_Med10"/>
</dbReference>
<dbReference type="PANTHER" id="PTHR13345">
    <property type="entry name" value="MEDIATOR OF RNA POLYMERASE II TRANSCRIPTION SUBUNIT 10"/>
    <property type="match status" value="1"/>
</dbReference>
<dbReference type="PANTHER" id="PTHR13345:SF13">
    <property type="entry name" value="MEDIATOR OF RNA POLYMERASE II TRANSCRIPTION SUBUNIT 10"/>
    <property type="match status" value="1"/>
</dbReference>
<dbReference type="Pfam" id="PF09748">
    <property type="entry name" value="Med10"/>
    <property type="match status" value="1"/>
</dbReference>
<evidence type="ECO:0000250" key="1"/>
<evidence type="ECO:0000305" key="2"/>
<gene>
    <name type="primary">NUT2</name>
    <name type="synonym">MED10</name>
    <name type="ordered locus">CAALFM_C111980WA</name>
    <name type="ORF">CaO19.12733</name>
    <name type="ORF">CaO19.5268</name>
</gene>